<gene>
    <name evidence="1" type="primary">rpmC</name>
    <name type="ordered locus">Bcep1808_0338</name>
</gene>
<evidence type="ECO:0000255" key="1">
    <source>
        <dbReference type="HAMAP-Rule" id="MF_00374"/>
    </source>
</evidence>
<evidence type="ECO:0000305" key="2"/>
<comment type="similarity">
    <text evidence="1">Belongs to the universal ribosomal protein uL29 family.</text>
</comment>
<dbReference type="EMBL" id="CP000614">
    <property type="protein sequence ID" value="ABO53351.1"/>
    <property type="molecule type" value="Genomic_DNA"/>
</dbReference>
<dbReference type="SMR" id="A4JAP8"/>
<dbReference type="KEGG" id="bvi:Bcep1808_0338"/>
<dbReference type="eggNOG" id="COG0255">
    <property type="taxonomic scope" value="Bacteria"/>
</dbReference>
<dbReference type="HOGENOM" id="CLU_158491_1_1_4"/>
<dbReference type="Proteomes" id="UP000002287">
    <property type="component" value="Chromosome 1"/>
</dbReference>
<dbReference type="GO" id="GO:0022625">
    <property type="term" value="C:cytosolic large ribosomal subunit"/>
    <property type="evidence" value="ECO:0007669"/>
    <property type="project" value="TreeGrafter"/>
</dbReference>
<dbReference type="GO" id="GO:0003735">
    <property type="term" value="F:structural constituent of ribosome"/>
    <property type="evidence" value="ECO:0007669"/>
    <property type="project" value="InterPro"/>
</dbReference>
<dbReference type="GO" id="GO:0006412">
    <property type="term" value="P:translation"/>
    <property type="evidence" value="ECO:0007669"/>
    <property type="project" value="UniProtKB-UniRule"/>
</dbReference>
<dbReference type="CDD" id="cd00427">
    <property type="entry name" value="Ribosomal_L29_HIP"/>
    <property type="match status" value="1"/>
</dbReference>
<dbReference type="FunFam" id="1.10.287.310:FF:000001">
    <property type="entry name" value="50S ribosomal protein L29"/>
    <property type="match status" value="1"/>
</dbReference>
<dbReference type="Gene3D" id="6.10.140.1970">
    <property type="match status" value="1"/>
</dbReference>
<dbReference type="HAMAP" id="MF_00374">
    <property type="entry name" value="Ribosomal_uL29"/>
    <property type="match status" value="1"/>
</dbReference>
<dbReference type="InterPro" id="IPR050063">
    <property type="entry name" value="Ribosomal_protein_uL29"/>
</dbReference>
<dbReference type="InterPro" id="IPR001854">
    <property type="entry name" value="Ribosomal_uL29"/>
</dbReference>
<dbReference type="InterPro" id="IPR018254">
    <property type="entry name" value="Ribosomal_uL29_CS"/>
</dbReference>
<dbReference type="InterPro" id="IPR036049">
    <property type="entry name" value="Ribosomal_uL29_sf"/>
</dbReference>
<dbReference type="NCBIfam" id="TIGR00012">
    <property type="entry name" value="L29"/>
    <property type="match status" value="1"/>
</dbReference>
<dbReference type="PANTHER" id="PTHR10916">
    <property type="entry name" value="60S RIBOSOMAL PROTEIN L35/50S RIBOSOMAL PROTEIN L29"/>
    <property type="match status" value="1"/>
</dbReference>
<dbReference type="PANTHER" id="PTHR10916:SF0">
    <property type="entry name" value="LARGE RIBOSOMAL SUBUNIT PROTEIN UL29C"/>
    <property type="match status" value="1"/>
</dbReference>
<dbReference type="Pfam" id="PF00831">
    <property type="entry name" value="Ribosomal_L29"/>
    <property type="match status" value="1"/>
</dbReference>
<dbReference type="SUPFAM" id="SSF46561">
    <property type="entry name" value="Ribosomal protein L29 (L29p)"/>
    <property type="match status" value="1"/>
</dbReference>
<dbReference type="PROSITE" id="PS00579">
    <property type="entry name" value="RIBOSOMAL_L29"/>
    <property type="match status" value="1"/>
</dbReference>
<feature type="chain" id="PRO_1000007445" description="Large ribosomal subunit protein uL29">
    <location>
        <begin position="1"/>
        <end position="64"/>
    </location>
</feature>
<keyword id="KW-0687">Ribonucleoprotein</keyword>
<keyword id="KW-0689">Ribosomal protein</keyword>
<name>RL29_BURVG</name>
<protein>
    <recommendedName>
        <fullName evidence="1">Large ribosomal subunit protein uL29</fullName>
    </recommendedName>
    <alternativeName>
        <fullName evidence="2">50S ribosomal protein L29</fullName>
    </alternativeName>
</protein>
<sequence length="64" mass="7312">MKASELLQKDQAALNKELADLLKAQFGLRMQLATQQLTNTSQLKKVRRDIARVRTVMTQKANQK</sequence>
<proteinExistence type="inferred from homology"/>
<reference key="1">
    <citation type="submission" date="2007-03" db="EMBL/GenBank/DDBJ databases">
        <title>Complete sequence of chromosome 1 of Burkholderia vietnamiensis G4.</title>
        <authorList>
            <consortium name="US DOE Joint Genome Institute"/>
            <person name="Copeland A."/>
            <person name="Lucas S."/>
            <person name="Lapidus A."/>
            <person name="Barry K."/>
            <person name="Detter J.C."/>
            <person name="Glavina del Rio T."/>
            <person name="Hammon N."/>
            <person name="Israni S."/>
            <person name="Dalin E."/>
            <person name="Tice H."/>
            <person name="Pitluck S."/>
            <person name="Chain P."/>
            <person name="Malfatti S."/>
            <person name="Shin M."/>
            <person name="Vergez L."/>
            <person name="Schmutz J."/>
            <person name="Larimer F."/>
            <person name="Land M."/>
            <person name="Hauser L."/>
            <person name="Kyrpides N."/>
            <person name="Tiedje J."/>
            <person name="Richardson P."/>
        </authorList>
    </citation>
    <scope>NUCLEOTIDE SEQUENCE [LARGE SCALE GENOMIC DNA]</scope>
    <source>
        <strain>G4 / LMG 22486</strain>
    </source>
</reference>
<accession>A4JAP8</accession>
<organism>
    <name type="scientific">Burkholderia vietnamiensis (strain G4 / LMG 22486)</name>
    <name type="common">Burkholderia cepacia (strain R1808)</name>
    <dbReference type="NCBI Taxonomy" id="269482"/>
    <lineage>
        <taxon>Bacteria</taxon>
        <taxon>Pseudomonadati</taxon>
        <taxon>Pseudomonadota</taxon>
        <taxon>Betaproteobacteria</taxon>
        <taxon>Burkholderiales</taxon>
        <taxon>Burkholderiaceae</taxon>
        <taxon>Burkholderia</taxon>
        <taxon>Burkholderia cepacia complex</taxon>
    </lineage>
</organism>